<keyword id="KW-0002">3D-structure</keyword>
<keyword id="KW-0007">Acetylation</keyword>
<keyword id="KW-0175">Coiled coil</keyword>
<keyword id="KW-0903">Direct protein sequencing</keyword>
<keyword id="KW-0325">Glycoprotein</keyword>
<keyword id="KW-0375">Hydrogen ion transport</keyword>
<keyword id="KW-0406">Ion transport</keyword>
<keyword id="KW-0472">Membrane</keyword>
<keyword id="KW-1185">Reference proteome</keyword>
<keyword id="KW-0812">Transmembrane</keyword>
<keyword id="KW-1133">Transmembrane helix</keyword>
<keyword id="KW-0813">Transport</keyword>
<keyword id="KW-0926">Vacuole</keyword>
<organism>
    <name type="scientific">Saccharomyces cerevisiae (strain ATCC 204508 / S288c)</name>
    <name type="common">Baker's yeast</name>
    <dbReference type="NCBI Taxonomy" id="559292"/>
    <lineage>
        <taxon>Eukaryota</taxon>
        <taxon>Fungi</taxon>
        <taxon>Dikarya</taxon>
        <taxon>Ascomycota</taxon>
        <taxon>Saccharomycotina</taxon>
        <taxon>Saccharomycetes</taxon>
        <taxon>Saccharomycetales</taxon>
        <taxon>Saccharomycetaceae</taxon>
        <taxon>Saccharomyces</taxon>
    </lineage>
</organism>
<accession>P32563</accession>
<accession>D6W2X0</accession>
<comment type="function">
    <text evidence="2 5 9">Subunit of the V0 complex of vacuolar(H+)-ATPase (V-ATPase), a multisubunit enzyme composed of a peripheral complex (V1) that hydrolyzes ATP and a membrane integral complex (V0) that translocates protons (PubMed:11278748, PubMed:1491220, PubMed:8798414). V-ATPase is responsible for acidifying and maintaining the pH of intracellular compartments (PubMed:11278748, PubMed:1491220). Is present only in vacuolar V-ATPase complexes; enzymes containing this subunit have a 4-fold higher ratio of proton transport to ATP hydrolysis than complexes containing the Golgi/endosomal isoform and undergo reversible dissociation of V1 and V0 in response to glucose depletion (PubMed:11278748, PubMed:8798414).</text>
</comment>
<comment type="subunit">
    <text evidence="5 6 7 8">V-ATPase is a heteromultimeric enzyme composed of a peripheral catalytic V1 complex (components A to H) attached to an integral membrane V0 proton pore complex (components: a, c, c', c'', d, e, f and VOA1).</text>
</comment>
<comment type="interaction">
    <interactant intactId="EBI-20455">
        <id>P32563</id>
    </interactant>
    <interactant intactId="EBI-20281">
        <id>P41807</id>
        <label>VMA13</label>
    </interactant>
    <organismsDiffer>false</organismsDiffer>
    <experiments>4</experiments>
</comment>
<comment type="interaction">
    <interactant intactId="EBI-20455">
        <id>P32563</id>
    </interactant>
    <interactant intactId="EBI-20201">
        <id>P32366</id>
        <label>VMA6</label>
    </interactant>
    <organismsDiffer>false</organismsDiffer>
    <experiments>13</experiments>
</comment>
<comment type="interaction">
    <interactant intactId="EBI-20455">
        <id>P32563</id>
    </interactant>
    <interactant intactId="EBI-20272">
        <id>P39111</id>
        <label>VMA7</label>
    </interactant>
    <organismsDiffer>false</organismsDiffer>
    <experiments>6</experiments>
</comment>
<comment type="interaction">
    <interactant intactId="EBI-20455">
        <id>P32563</id>
    </interactant>
    <interactant intactId="EBI-20264">
        <id>P32610</id>
        <label>VMA8</label>
    </interactant>
    <organismsDiffer>false</organismsDiffer>
    <experiments>3</experiments>
</comment>
<comment type="subcellular location">
    <subcellularLocation>
        <location evidence="3">Vacuole membrane</location>
        <topology evidence="3">Multi-pass membrane protein</topology>
    </subcellularLocation>
</comment>
<comment type="PTM">
    <text>Glycosylated.</text>
</comment>
<comment type="miscellaneous">
    <text evidence="4">Present with 55714 molecules/cell in log phase SD medium.</text>
</comment>
<comment type="similarity">
    <text evidence="13">Belongs to the V-ATPase 116 kDa subunit family.</text>
</comment>
<name>VPP1_YEAST</name>
<gene>
    <name evidence="12" type="primary">VPH1</name>
    <name type="ordered locus">YOR270C</name>
</gene>
<reference key="1">
    <citation type="journal article" date="1992" name="J. Biol. Chem.">
        <title>The VPH1 gene encodes a 95-kDa integral membrane polypeptide required for in vivo assembly and activity of the yeast vacuolar H(+)-ATPase.</title>
        <authorList>
            <person name="Manolson M.F."/>
            <person name="Proteau D."/>
            <person name="Preston R.A."/>
            <person name="Stenbit A."/>
            <person name="Roberts B.T."/>
            <person name="Hoyt M.A."/>
            <person name="Preuss D."/>
            <person name="Mulholland J."/>
            <person name="Botstein D."/>
            <person name="Jones E.W."/>
        </authorList>
    </citation>
    <scope>NUCLEOTIDE SEQUENCE [GENOMIC DNA]</scope>
</reference>
<reference key="2">
    <citation type="journal article" date="1996" name="Yeast">
        <title>DNA sequence analysis of the VPH1-SNF2 region on chromosome XV of Saccharomyces cerevisiae.</title>
        <authorList>
            <person name="Cheret G."/>
            <person name="Bernardi A."/>
            <person name="Sor F.J."/>
        </authorList>
    </citation>
    <scope>NUCLEOTIDE SEQUENCE [GENOMIC DNA]</scope>
    <source>
        <strain>ATCC 204508 / S288c</strain>
    </source>
</reference>
<reference key="3">
    <citation type="journal article" date="1997" name="Yeast">
        <title>Sequencing analysis of a 36.8 kb fragment of yeast chromosome XV reveals 26 open reading frames including SEC63, CDC31, SUG2, GCD1, RBL2, PNT1, PAC1 and VPH1.</title>
        <authorList>
            <person name="Poirey R."/>
            <person name="Jauniaux J.-C."/>
        </authorList>
    </citation>
    <scope>NUCLEOTIDE SEQUENCE [GENOMIC DNA]</scope>
    <source>
        <strain>ATCC 96604 / S288c / FY1679</strain>
    </source>
</reference>
<reference key="4">
    <citation type="journal article" date="1997" name="Nature">
        <title>The nucleotide sequence of Saccharomyces cerevisiae chromosome XV.</title>
        <authorList>
            <person name="Dujon B."/>
            <person name="Albermann K."/>
            <person name="Aldea M."/>
            <person name="Alexandraki D."/>
            <person name="Ansorge W."/>
            <person name="Arino J."/>
            <person name="Benes V."/>
            <person name="Bohn C."/>
            <person name="Bolotin-Fukuhara M."/>
            <person name="Bordonne R."/>
            <person name="Boyer J."/>
            <person name="Camasses A."/>
            <person name="Casamayor A."/>
            <person name="Casas C."/>
            <person name="Cheret G."/>
            <person name="Cziepluch C."/>
            <person name="Daignan-Fornier B."/>
            <person name="Dang V.-D."/>
            <person name="de Haan M."/>
            <person name="Delius H."/>
            <person name="Durand P."/>
            <person name="Fairhead C."/>
            <person name="Feldmann H."/>
            <person name="Gaillon L."/>
            <person name="Galisson F."/>
            <person name="Gamo F.-J."/>
            <person name="Gancedo C."/>
            <person name="Goffeau A."/>
            <person name="Goulding S.E."/>
            <person name="Grivell L.A."/>
            <person name="Habbig B."/>
            <person name="Hand N.J."/>
            <person name="Hani J."/>
            <person name="Hattenhorst U."/>
            <person name="Hebling U."/>
            <person name="Hernando Y."/>
            <person name="Herrero E."/>
            <person name="Heumann K."/>
            <person name="Hiesel R."/>
            <person name="Hilger F."/>
            <person name="Hofmann B."/>
            <person name="Hollenberg C.P."/>
            <person name="Hughes B."/>
            <person name="Jauniaux J.-C."/>
            <person name="Kalogeropoulos A."/>
            <person name="Katsoulou C."/>
            <person name="Kordes E."/>
            <person name="Lafuente M.J."/>
            <person name="Landt O."/>
            <person name="Louis E.J."/>
            <person name="Maarse A.C."/>
            <person name="Madania A."/>
            <person name="Mannhaupt G."/>
            <person name="Marck C."/>
            <person name="Martin R.P."/>
            <person name="Mewes H.-W."/>
            <person name="Michaux G."/>
            <person name="Paces V."/>
            <person name="Parle-McDermott A.G."/>
            <person name="Pearson B.M."/>
            <person name="Perrin A."/>
            <person name="Pettersson B."/>
            <person name="Poch O."/>
            <person name="Pohl T.M."/>
            <person name="Poirey R."/>
            <person name="Portetelle D."/>
            <person name="Pujol A."/>
            <person name="Purnelle B."/>
            <person name="Ramezani Rad M."/>
            <person name="Rechmann S."/>
            <person name="Schwager C."/>
            <person name="Schweizer M."/>
            <person name="Sor F."/>
            <person name="Sterky F."/>
            <person name="Tarassov I.A."/>
            <person name="Teodoru C."/>
            <person name="Tettelin H."/>
            <person name="Thierry A."/>
            <person name="Tobiasch E."/>
            <person name="Tzermia M."/>
            <person name="Uhlen M."/>
            <person name="Unseld M."/>
            <person name="Valens M."/>
            <person name="Vandenbol M."/>
            <person name="Vetter I."/>
            <person name="Vlcek C."/>
            <person name="Voet M."/>
            <person name="Volckaert G."/>
            <person name="Voss H."/>
            <person name="Wambutt R."/>
            <person name="Wedler H."/>
            <person name="Wiemann S."/>
            <person name="Winsor B."/>
            <person name="Wolfe K.H."/>
            <person name="Zollner A."/>
            <person name="Zumstein E."/>
            <person name="Kleine K."/>
        </authorList>
    </citation>
    <scope>NUCLEOTIDE SEQUENCE [LARGE SCALE GENOMIC DNA]</scope>
    <source>
        <strain>ATCC 204508 / S288c</strain>
    </source>
</reference>
<reference key="5">
    <citation type="journal article" date="2014" name="G3 (Bethesda)">
        <title>The reference genome sequence of Saccharomyces cerevisiae: Then and now.</title>
        <authorList>
            <person name="Engel S.R."/>
            <person name="Dietrich F.S."/>
            <person name="Fisk D.G."/>
            <person name="Binkley G."/>
            <person name="Balakrishnan R."/>
            <person name="Costanzo M.C."/>
            <person name="Dwight S.S."/>
            <person name="Hitz B.C."/>
            <person name="Karra K."/>
            <person name="Nash R.S."/>
            <person name="Weng S."/>
            <person name="Wong E.D."/>
            <person name="Lloyd P."/>
            <person name="Skrzypek M.S."/>
            <person name="Miyasato S.R."/>
            <person name="Simison M."/>
            <person name="Cherry J.M."/>
        </authorList>
    </citation>
    <scope>GENOME REANNOTATION</scope>
    <source>
        <strain>ATCC 204508 / S288c</strain>
    </source>
</reference>
<reference key="6">
    <citation type="submission" date="2005-06" db="UniProtKB">
        <authorList>
            <person name="Bienvenut W.V."/>
            <person name="Peters C."/>
        </authorList>
    </citation>
    <scope>PROTEIN SEQUENCE OF 2-10</scope>
    <scope>CLEAVAGE OF INITIATOR METHIONINE</scope>
    <scope>ACETYLATION AT ALA-2</scope>
    <scope>IDENTIFICATION BY MASS SPECTROMETRY</scope>
</reference>
<reference key="7">
    <citation type="journal article" date="1992" name="J. Exp. Biol.">
        <title>Evidence for a conserved 95-120 kDa subunit associated with and essential for activity of V-ATPases.</title>
        <authorList>
            <person name="Manolson M.F."/>
            <person name="Proteau D."/>
            <person name="Jones E.W."/>
        </authorList>
    </citation>
    <scope>FUNCTION</scope>
    <scope>SUBUNIT</scope>
</reference>
<reference key="8">
    <citation type="journal article" date="1996" name="J. Biol. Chem.">
        <title>Site-directed mutagenesis of the 100-kDa subunit (Vph1p) of the yeast vacuolar (H+)-ATPase.</title>
        <authorList>
            <person name="Leng X.-H."/>
            <person name="Manolson M.F."/>
            <person name="Liu Q."/>
            <person name="Forgac M."/>
        </authorList>
    </citation>
    <scope>FUNCTION</scope>
    <scope>MUTAGENESIS OF ASP-425; LYS-538; LYS-593; GLN-634; ARG-735; HIS-743 AND GLU-789</scope>
</reference>
<reference key="9">
    <citation type="journal article" date="1996" name="J. Biol. Chem.">
        <authorList>
            <person name="Leng X.-H."/>
            <person name="Manolson M.F."/>
            <person name="Liu Q."/>
            <person name="Forgac M."/>
        </authorList>
    </citation>
    <scope>ERRATUM OF PUBMED:8798414</scope>
</reference>
<reference key="10">
    <citation type="journal article" date="1998" name="J. Biol. Chem.">
        <title>Function of the COOH-terminal domain of Vph1p in activity and assembly of the yeast V-ATPase.</title>
        <authorList>
            <person name="Leng X.-H."/>
            <person name="Manolson M.F."/>
            <person name="Forgac M."/>
        </authorList>
    </citation>
    <scope>MUTAGENESIS OF HIS-729; LEU-739; HIS-743; LEU-746; LEU-780; GLU-789; LEU-800; TRP-802; VAL-803; PHE-809 AND GLY-814</scope>
</reference>
<reference key="11">
    <citation type="journal article" date="1999" name="J. Biol. Chem.">
        <title>Transmembrane topography of the 100-kDa a subunit (Vph1p) of the yeast vacuolar proton-translocating ATPase.</title>
        <authorList>
            <person name="Leng X.-H."/>
            <person name="Nishi T."/>
            <person name="Forgac M."/>
        </authorList>
    </citation>
    <scope>TOPOLOGY</scope>
</reference>
<reference key="12">
    <citation type="journal article" date="1999" name="J. Biol. Chem.">
        <title>Substrate- and inhibitor-induced conformational changes in the yeast V-ATPase provide evidence for communication between the catalytic and proton-translocating sectors.</title>
        <authorList>
            <person name="Landolt-Marticorena C."/>
            <person name="Kahr W.H."/>
            <person name="Zawarinski P."/>
            <person name="Correa J."/>
            <person name="Manolson M.F."/>
        </authorList>
    </citation>
    <scope>TOPOLOGY</scope>
</reference>
<reference key="13">
    <citation type="journal article" date="2001" name="J. Biol. Chem.">
        <title>Yeast V-ATPase complexes containing different isoforms of the 100-kDa a-subunit differ in coupling efficiency and in vivo dissociation.</title>
        <authorList>
            <person name="Kawasaki-Nishi S."/>
            <person name="Nishi T."/>
            <person name="Forgac M."/>
        </authorList>
    </citation>
    <scope>FUNCTION</scope>
</reference>
<reference key="14">
    <citation type="journal article" date="2003" name="Nature">
        <title>Global analysis of protein localization in budding yeast.</title>
        <authorList>
            <person name="Huh W.-K."/>
            <person name="Falvo J.V."/>
            <person name="Gerke L.C."/>
            <person name="Carroll A.S."/>
            <person name="Howson R.W."/>
            <person name="Weissman J.S."/>
            <person name="O'Shea E.K."/>
        </authorList>
    </citation>
    <scope>SUBCELLULAR LOCATION [LARGE SCALE ANALYSIS]</scope>
</reference>
<reference key="15">
    <citation type="journal article" date="2003" name="Nature">
        <title>Global analysis of protein expression in yeast.</title>
        <authorList>
            <person name="Ghaemmaghami S."/>
            <person name="Huh W.-K."/>
            <person name="Bower K."/>
            <person name="Howson R.W."/>
            <person name="Belle A."/>
            <person name="Dephoure N."/>
            <person name="O'Shea E.K."/>
            <person name="Weissman J.S."/>
        </authorList>
    </citation>
    <scope>LEVEL OF PROTEIN EXPRESSION [LARGE SCALE ANALYSIS]</scope>
</reference>
<reference key="16">
    <citation type="journal article" date="2006" name="Proc. Natl. Acad. Sci. U.S.A.">
        <title>A global topology map of the Saccharomyces cerevisiae membrane proteome.</title>
        <authorList>
            <person name="Kim H."/>
            <person name="Melen K."/>
            <person name="Oesterberg M."/>
            <person name="von Heijne G."/>
        </authorList>
    </citation>
    <scope>TOPOLOGY [LARGE SCALE ANALYSIS]</scope>
    <source>
        <strain>ATCC 208353 / W303-1A</strain>
    </source>
</reference>
<reference key="17">
    <citation type="journal article" date="2008" name="Mol. Cell. Proteomics">
        <title>A multidimensional chromatography technology for in-depth phosphoproteome analysis.</title>
        <authorList>
            <person name="Albuquerque C.P."/>
            <person name="Smolka M.B."/>
            <person name="Payne S.H."/>
            <person name="Bafna V."/>
            <person name="Eng J."/>
            <person name="Zhou H."/>
        </authorList>
    </citation>
    <scope>IDENTIFICATION BY MASS SPECTROMETRY [LARGE SCALE ANALYSIS]</scope>
</reference>
<reference key="18">
    <citation type="journal article" date="2011" name="J. Biol. Chem.">
        <title>Definition of membrane topology and identification of residues important for transport in subunit a of the vacuolar ATPase.</title>
        <authorList>
            <person name="Toei M."/>
            <person name="Toei S."/>
            <person name="Forgac M."/>
        </authorList>
    </citation>
    <scope>TOPOLOGY</scope>
</reference>
<reference key="19">
    <citation type="journal article" date="2012" name="Proc. Natl. Acad. Sci. U.S.A.">
        <title>N-terminal acetylome analyses and functional insights of the N-terminal acetyltransferase NatB.</title>
        <authorList>
            <person name="Van Damme P."/>
            <person name="Lasa M."/>
            <person name="Polevoda B."/>
            <person name="Gazquez C."/>
            <person name="Elosegui-Artola A."/>
            <person name="Kim D.S."/>
            <person name="De Juan-Pardo E."/>
            <person name="Demeyer K."/>
            <person name="Hole K."/>
            <person name="Larrea E."/>
            <person name="Timmerman E."/>
            <person name="Prieto J."/>
            <person name="Arnesen T."/>
            <person name="Sherman F."/>
            <person name="Gevaert K."/>
            <person name="Aldabe R."/>
        </authorList>
    </citation>
    <scope>ACETYLATION [LARGE SCALE ANALYSIS] AT ALA-2</scope>
    <scope>CLEAVAGE OF INITIATOR METHIONINE [LARGE SCALE ANALYSIS]</scope>
    <scope>IDENTIFICATION BY MASS SPECTROMETRY [LARGE SCALE ANALYSIS]</scope>
</reference>
<reference evidence="14 15 16" key="20">
    <citation type="journal article" date="2015" name="Nature">
        <title>Electron cryomicroscopy observation of rotational states in a eukaryotic V-ATPase.</title>
        <authorList>
            <person name="Zhao J."/>
            <person name="Benlekbir S."/>
            <person name="Rubinstein J.L."/>
        </authorList>
    </citation>
    <scope>STRUCTURE BY ELECTRON MICROSCOPY (6.90 ANGSTROMS)</scope>
    <scope>IDENTIFICATION IN THE V-ATPASE COMPLEX</scope>
</reference>
<reference evidence="17" key="21">
    <citation type="journal article" date="2016" name="Nature">
        <title>Atomic model for the membrane-embedded VO motor of a eukaryotic V-ATPase.</title>
        <authorList>
            <person name="Mazhab-Jafari M.T."/>
            <person name="Rohou A."/>
            <person name="Schmidt C."/>
            <person name="Bueler S.A."/>
            <person name="Benlekbir S."/>
            <person name="Robinson C.V."/>
            <person name="Rubinstein J.L."/>
        </authorList>
    </citation>
    <scope>STRUCTURE BY ELECTRON MICROSCOPY (3.90 ANGSTROMS) OF 400-829</scope>
    <scope>IDENTIFICATION IN THE V-ATPASE COMPLEX</scope>
</reference>
<reference evidence="18" key="22">
    <citation type="journal article" date="2018" name="Mol. Cell">
        <title>The 3.5-A cryoEM structure of nanodisc-reconstituted yeast vacuolar ATPase V0 proton channel.</title>
        <authorList>
            <person name="Roh S.H."/>
            <person name="Stam N.J."/>
            <person name="Hryc C.F."/>
            <person name="Couoh-Cardel S."/>
            <person name="Pintilie G."/>
            <person name="Chiu W."/>
            <person name="Wilkens S."/>
        </authorList>
    </citation>
    <scope>STRUCTURE BY ELECTRON MICROSCOPY (3.50 ANGSTROMS)</scope>
    <scope>IDENTIFICATION IN THE V-ATPASE COMPLEX</scope>
</reference>
<evidence type="ECO:0000255" key="1"/>
<evidence type="ECO:0000269" key="2">
    <source>
    </source>
</evidence>
<evidence type="ECO:0000269" key="3">
    <source>
    </source>
</evidence>
<evidence type="ECO:0000269" key="4">
    <source>
    </source>
</evidence>
<evidence type="ECO:0000269" key="5">
    <source>
    </source>
</evidence>
<evidence type="ECO:0000269" key="6">
    <source>
    </source>
</evidence>
<evidence type="ECO:0000269" key="7">
    <source>
    </source>
</evidence>
<evidence type="ECO:0000269" key="8">
    <source>
    </source>
</evidence>
<evidence type="ECO:0000269" key="9">
    <source>
    </source>
</evidence>
<evidence type="ECO:0000269" key="10">
    <source>
    </source>
</evidence>
<evidence type="ECO:0000269" key="11">
    <source ref="6"/>
</evidence>
<evidence type="ECO:0000303" key="12">
    <source>
    </source>
</evidence>
<evidence type="ECO:0000305" key="13"/>
<evidence type="ECO:0007744" key="14">
    <source>
        <dbReference type="PDB" id="3J9T"/>
    </source>
</evidence>
<evidence type="ECO:0007744" key="15">
    <source>
        <dbReference type="PDB" id="3J9U"/>
    </source>
</evidence>
<evidence type="ECO:0007744" key="16">
    <source>
        <dbReference type="PDB" id="3J9V"/>
    </source>
</evidence>
<evidence type="ECO:0007744" key="17">
    <source>
        <dbReference type="PDB" id="5TJ5"/>
    </source>
</evidence>
<evidence type="ECO:0007744" key="18">
    <source>
        <dbReference type="PDB" id="6C6L"/>
    </source>
</evidence>
<evidence type="ECO:0007744" key="19">
    <source>
    </source>
</evidence>
<evidence type="ECO:0007829" key="20">
    <source>
        <dbReference type="PDB" id="6C6L"/>
    </source>
</evidence>
<evidence type="ECO:0007829" key="21">
    <source>
        <dbReference type="PDB" id="6M0R"/>
    </source>
</evidence>
<evidence type="ECO:0007829" key="22">
    <source>
        <dbReference type="PDB" id="6O7T"/>
    </source>
</evidence>
<evidence type="ECO:0007829" key="23">
    <source>
        <dbReference type="PDB" id="6PE4"/>
    </source>
</evidence>
<evidence type="ECO:0007829" key="24">
    <source>
        <dbReference type="PDB" id="7TAP"/>
    </source>
</evidence>
<evidence type="ECO:0007829" key="25">
    <source>
        <dbReference type="PDB" id="7TMR"/>
    </source>
</evidence>
<evidence type="ECO:0007829" key="26">
    <source>
        <dbReference type="PDB" id="8EAS"/>
    </source>
</evidence>
<evidence type="ECO:0007829" key="27">
    <source>
        <dbReference type="PDB" id="8EAU"/>
    </source>
</evidence>
<sequence length="840" mass="95529">MAEKEEAIFRSAEMALVQFYIPQEISRDSAYTLGQLGLVQFRDLNSKVRAFQRTFVNEIRRLDNVERQYRYFYSLLKKHDIKLYEGDTDKYLDGSGELYVPPSGSVIDDYVRNASYLEERLIQMEDATDQIEVQKNDLEQYRFILQSGDEFFLKGDNTDSTSYMDEDMIDANGENIAAAIGASVNYVTGVIARDKVATLEQILWRVLRGNLFFKTVEIEQPVYDVKTREYKHKNAFIVFSHGDLIIKRIRKIAESLDANLYDVDSSNEGRSQQLAKVNKNLSDLYTVLKTTSTTLESELYAIAKELDSWFQDVTREKAIFEILNKSNYDTNRKILIAEGWIPRDELATLQARLGEMIARLGIDVPSIIQVLDTNHTPPTFHRTNKFTAGFQSICDCYGIAQYREINAGLPTIVTFPFMFAIMFGDMGHGFLMTLAALSLVLNEKKINKMKRGEIFDMAFTGRYIILLMGVFSMYTGFLYNDIFSKTMTIFKSGWKWPDHWKKGESITATSVGTYPIGLDWAWHGTENALLFSNSYKMKLSILMGFIHMTYSYFFSLANHLYFNSMIDIIGNFIPGLLFMQGIFGYLSVCIVYKWAVDWVKDGKPAPGLLNMLINMFLSPGTIDDELYPHQAKVQVFLLLMALVCIPWLLLVKPLHFKFTHKKKSHEPLPSTEADASSEDLEAQQLISAMDADDAEEEEVGSGSHGEDFGDIMIHQVIHTIEFCLNCVSHTASYLRLWALSLAHAQLSSVLWTMTIQIAFGFRGFVGVFMTVALFAMWFALTCAVLVLMEGTSAMLHSLRLHWVESMSKFFVGEGLPYEPFAFEYKDMEVAVASASSSASS</sequence>
<proteinExistence type="evidence at protein level"/>
<protein>
    <recommendedName>
        <fullName>V-type proton ATPase subunit a, vacuolar isoform</fullName>
        <shortName>V-ATPase a 1 subunit</shortName>
    </recommendedName>
    <alternativeName>
        <fullName>V-ATPase 95 kDa subunit</fullName>
    </alternativeName>
    <alternativeName>
        <fullName>Vacuolar pH protein 1</fullName>
    </alternativeName>
    <alternativeName>
        <fullName>Vacuolar proton pump a subunit</fullName>
    </alternativeName>
    <alternativeName>
        <fullName>Vacuolar proton translocating ATPase subunit a 1</fullName>
    </alternativeName>
</protein>
<feature type="initiator methionine" description="Removed" evidence="11 19">
    <location>
        <position position="1"/>
    </location>
</feature>
<feature type="chain" id="PRO_0000119224" description="V-type proton ATPase subunit a, vacuolar isoform">
    <location>
        <begin position="2"/>
        <end position="840"/>
    </location>
</feature>
<feature type="topological domain" description="Cytoplasmic" evidence="1">
    <location>
        <begin position="2"/>
        <end position="404"/>
    </location>
</feature>
<feature type="transmembrane region" description="Helical" evidence="1">
    <location>
        <begin position="405"/>
        <end position="423"/>
    </location>
</feature>
<feature type="topological domain" description="Vacuolar" evidence="1">
    <location>
        <begin position="424"/>
        <end position="425"/>
    </location>
</feature>
<feature type="transmembrane region" description="Helical" evidence="1">
    <location>
        <begin position="426"/>
        <end position="442"/>
    </location>
</feature>
<feature type="topological domain" description="Cytoplasmic" evidence="1">
    <location>
        <begin position="443"/>
        <end position="456"/>
    </location>
</feature>
<feature type="transmembrane region" description="Helical" evidence="1">
    <location>
        <begin position="457"/>
        <end position="486"/>
    </location>
</feature>
<feature type="topological domain" description="Vacuolar" evidence="1">
    <location>
        <begin position="487"/>
        <end position="534"/>
    </location>
</feature>
<feature type="transmembrane region" description="Helical" evidence="1">
    <location>
        <begin position="535"/>
        <end position="554"/>
    </location>
</feature>
<feature type="topological domain" description="Cytoplasmic" evidence="1">
    <location>
        <begin position="555"/>
        <end position="572"/>
    </location>
</feature>
<feature type="transmembrane region" description="Helical" evidence="1">
    <location>
        <begin position="573"/>
        <end position="593"/>
    </location>
</feature>
<feature type="topological domain" description="Vacuolar" evidence="1">
    <location>
        <begin position="594"/>
        <end position="636"/>
    </location>
</feature>
<feature type="transmembrane region" description="Helical" evidence="1">
    <location>
        <begin position="637"/>
        <end position="656"/>
    </location>
</feature>
<feature type="topological domain" description="Cytoplasmic" evidence="1">
    <location>
        <begin position="657"/>
        <end position="719"/>
    </location>
</feature>
<feature type="transmembrane region" description="Helical" evidence="1">
    <location>
        <begin position="720"/>
        <end position="744"/>
    </location>
</feature>
<feature type="topological domain" description="Vacuolar" evidence="1">
    <location>
        <begin position="745"/>
        <end position="765"/>
    </location>
</feature>
<feature type="transmembrane region" description="Helical" evidence="1">
    <location>
        <begin position="766"/>
        <end position="804"/>
    </location>
</feature>
<feature type="topological domain" description="Cytoplasmic" evidence="1">
    <location>
        <begin position="805"/>
        <end position="840"/>
    </location>
</feature>
<feature type="coiled-coil region" evidence="1">
    <location>
        <begin position="117"/>
        <end position="145"/>
    </location>
</feature>
<feature type="modified residue" description="N-acetylalanine" evidence="11 19">
    <location>
        <position position="2"/>
    </location>
</feature>
<feature type="mutagenesis site" description="Reduces assembly of V-ATPase complexes and reduces ATPase activity of the assembled complexes." evidence="9">
    <original>D</original>
    <variation>N</variation>
    <location>
        <position position="425"/>
    </location>
</feature>
<feature type="mutagenesis site" description="Reduces assembly of V-ATPase complexes." evidence="9">
    <original>K</original>
    <variation>A</variation>
    <location>
        <position position="538"/>
    </location>
</feature>
<feature type="mutagenesis site" description="Reduces ATPase activity." evidence="9">
    <original>K</original>
    <variation>A</variation>
    <location>
        <position position="593"/>
    </location>
</feature>
<feature type="mutagenesis site" description="Reduces subunit stability." evidence="9">
    <original>Q</original>
    <variation>L</variation>
    <location>
        <position position="634"/>
    </location>
</feature>
<feature type="mutagenesis site" description="Reduces ATPase activity." evidence="10">
    <original>H</original>
    <variation>R</variation>
    <location>
        <position position="729"/>
    </location>
</feature>
<feature type="mutagenesis site" description="Reduces subunit stability." evidence="9">
    <original>R</original>
    <variation>L</variation>
    <location>
        <position position="735"/>
    </location>
</feature>
<feature type="mutagenesis site" description="Reduces ATPase activity." evidence="10">
    <original>L</original>
    <variation>S</variation>
    <location>
        <position position="739"/>
    </location>
</feature>
<feature type="mutagenesis site" description="Reduces ATPase activity." evidence="9 10">
    <original>H</original>
    <variation>A</variation>
    <variation>E</variation>
    <variation>Y</variation>
    <location>
        <position position="743"/>
    </location>
</feature>
<feature type="mutagenesis site" description="Reduces ATPase activity." evidence="10">
    <original>L</original>
    <variation>S</variation>
    <location>
        <position position="746"/>
    </location>
</feature>
<feature type="mutagenesis site" description="Reduces assembly of V-ATPase complexes." evidence="10">
    <original>L</original>
    <variation>S</variation>
    <location>
        <position position="780"/>
    </location>
</feature>
<feature type="mutagenesis site" description="Abolishes ATPase activity and proton transport, but does not affect complex assembly." evidence="9 10">
    <original>E</original>
    <variation>A</variation>
    <variation>D</variation>
    <variation>H</variation>
    <variation>Q</variation>
    <location>
        <position position="789"/>
    </location>
</feature>
<feature type="mutagenesis site" description="Reduces assembly of V-ATPase complexes." evidence="10">
    <original>L</original>
    <variation>S</variation>
    <location>
        <position position="800"/>
    </location>
</feature>
<feature type="mutagenesis site" description="Reduces assembly of V-ATPase complexes." evidence="10">
    <original>W</original>
    <variation>R</variation>
    <location>
        <position position="802"/>
    </location>
</feature>
<feature type="mutagenesis site" description="Reduces ATPase activity." evidence="10">
    <original>V</original>
    <variation>D</variation>
    <location>
        <position position="803"/>
    </location>
</feature>
<feature type="mutagenesis site" description="Reduces assembly of V-ATPase complexes." evidence="10">
    <original>V</original>
    <variation>F</variation>
    <location>
        <position position="803"/>
    </location>
</feature>
<feature type="mutagenesis site" description="Reduces assembly of V-ATPase complexes." evidence="10">
    <original>F</original>
    <variation>L</variation>
    <location>
        <position position="809"/>
    </location>
</feature>
<feature type="mutagenesis site" description="Reduces assembly of V-ATPase complexes." evidence="10">
    <original>G</original>
    <variation>D</variation>
    <location>
        <position position="814"/>
    </location>
</feature>
<feature type="strand" evidence="26">
    <location>
        <begin position="8"/>
        <end position="10"/>
    </location>
</feature>
<feature type="strand" evidence="26">
    <location>
        <begin position="14"/>
        <end position="22"/>
    </location>
</feature>
<feature type="helix" evidence="26">
    <location>
        <begin position="23"/>
        <end position="25"/>
    </location>
</feature>
<feature type="helix" evidence="26">
    <location>
        <begin position="26"/>
        <end position="36"/>
    </location>
</feature>
<feature type="strand" evidence="26">
    <location>
        <begin position="39"/>
        <end position="41"/>
    </location>
</feature>
<feature type="turn" evidence="24">
    <location>
        <begin position="44"/>
        <end position="47"/>
    </location>
</feature>
<feature type="turn" evidence="21">
    <location>
        <begin position="50"/>
        <end position="52"/>
    </location>
</feature>
<feature type="strand" evidence="23">
    <location>
        <begin position="53"/>
        <end position="55"/>
    </location>
</feature>
<feature type="helix" evidence="26">
    <location>
        <begin position="56"/>
        <end position="78"/>
    </location>
</feature>
<feature type="turn" evidence="24">
    <location>
        <begin position="88"/>
        <end position="94"/>
    </location>
</feature>
<feature type="strand" evidence="22">
    <location>
        <begin position="95"/>
        <end position="98"/>
    </location>
</feature>
<feature type="helix" evidence="26">
    <location>
        <begin position="105"/>
        <end position="145"/>
    </location>
</feature>
<feature type="helix" evidence="26">
    <location>
        <begin position="150"/>
        <end position="152"/>
    </location>
</feature>
<feature type="strand" evidence="26">
    <location>
        <begin position="186"/>
        <end position="192"/>
    </location>
</feature>
<feature type="helix" evidence="26">
    <location>
        <begin position="193"/>
        <end position="195"/>
    </location>
</feature>
<feature type="helix" evidence="26">
    <location>
        <begin position="196"/>
        <end position="206"/>
    </location>
</feature>
<feature type="turn" evidence="21">
    <location>
        <begin position="207"/>
        <end position="209"/>
    </location>
</feature>
<feature type="strand" evidence="26">
    <location>
        <begin position="213"/>
        <end position="217"/>
    </location>
</feature>
<feature type="strand" evidence="26">
    <location>
        <begin position="222"/>
        <end position="224"/>
    </location>
</feature>
<feature type="turn" evidence="26">
    <location>
        <begin position="225"/>
        <end position="228"/>
    </location>
</feature>
<feature type="strand" evidence="26">
    <location>
        <begin position="229"/>
        <end position="231"/>
    </location>
</feature>
<feature type="strand" evidence="26">
    <location>
        <begin position="233"/>
        <end position="239"/>
    </location>
</feature>
<feature type="helix" evidence="26">
    <location>
        <begin position="243"/>
        <end position="255"/>
    </location>
</feature>
<feature type="strand" evidence="26">
    <location>
        <begin position="259"/>
        <end position="261"/>
    </location>
</feature>
<feature type="strand" evidence="20">
    <location>
        <begin position="265"/>
        <end position="267"/>
    </location>
</feature>
<feature type="helix" evidence="26">
    <location>
        <begin position="268"/>
        <end position="270"/>
    </location>
</feature>
<feature type="helix" evidence="26">
    <location>
        <begin position="271"/>
        <end position="324"/>
    </location>
</feature>
<feature type="strand" evidence="26">
    <location>
        <begin position="326"/>
        <end position="329"/>
    </location>
</feature>
<feature type="turn" evidence="26">
    <location>
        <begin position="330"/>
        <end position="333"/>
    </location>
</feature>
<feature type="strand" evidence="26">
    <location>
        <begin position="334"/>
        <end position="342"/>
    </location>
</feature>
<feature type="helix" evidence="26">
    <location>
        <begin position="343"/>
        <end position="345"/>
    </location>
</feature>
<feature type="helix" evidence="26">
    <location>
        <begin position="346"/>
        <end position="359"/>
    </location>
</feature>
<feature type="strand" evidence="26">
    <location>
        <begin position="368"/>
        <end position="370"/>
    </location>
</feature>
<feature type="turn" evidence="26">
    <location>
        <begin position="385"/>
        <end position="387"/>
    </location>
</feature>
<feature type="helix" evidence="26">
    <location>
        <begin position="388"/>
        <end position="397"/>
    </location>
</feature>
<feature type="strand" evidence="25">
    <location>
        <begin position="402"/>
        <end position="404"/>
    </location>
</feature>
<feature type="helix" evidence="26">
    <location>
        <begin position="408"/>
        <end position="422"/>
    </location>
</feature>
<feature type="helix" evidence="26">
    <location>
        <begin position="426"/>
        <end position="441"/>
    </location>
</feature>
<feature type="helix" evidence="26">
    <location>
        <begin position="443"/>
        <end position="446"/>
    </location>
</feature>
<feature type="strand" evidence="22">
    <location>
        <begin position="447"/>
        <end position="449"/>
    </location>
</feature>
<feature type="helix" evidence="26">
    <location>
        <begin position="454"/>
        <end position="460"/>
    </location>
</feature>
<feature type="helix" evidence="26">
    <location>
        <begin position="462"/>
        <end position="479"/>
    </location>
</feature>
<feature type="strand" evidence="20">
    <location>
        <begin position="482"/>
        <end position="484"/>
    </location>
</feature>
<feature type="strand" evidence="26">
    <location>
        <begin position="493"/>
        <end position="495"/>
    </location>
</feature>
<feature type="strand" evidence="27">
    <location>
        <begin position="509"/>
        <end position="511"/>
    </location>
</feature>
<feature type="strand" evidence="26">
    <location>
        <begin position="515"/>
        <end position="518"/>
    </location>
</feature>
<feature type="helix" evidence="26">
    <location>
        <begin position="520"/>
        <end position="522"/>
    </location>
</feature>
<feature type="turn" evidence="23">
    <location>
        <begin position="525"/>
        <end position="527"/>
    </location>
</feature>
<feature type="helix" evidence="26">
    <location>
        <begin position="528"/>
        <end position="561"/>
    </location>
</feature>
<feature type="helix" evidence="26">
    <location>
        <begin position="565"/>
        <end position="570"/>
    </location>
</feature>
<feature type="helix" evidence="26">
    <location>
        <begin position="572"/>
        <end position="595"/>
    </location>
</feature>
<feature type="helix" evidence="26">
    <location>
        <begin position="598"/>
        <end position="601"/>
    </location>
</feature>
<feature type="helix" evidence="26">
    <location>
        <begin position="608"/>
        <end position="617"/>
    </location>
</feature>
<feature type="strand" evidence="20">
    <location>
        <begin position="618"/>
        <end position="620"/>
    </location>
</feature>
<feature type="strand" evidence="22">
    <location>
        <begin position="626"/>
        <end position="629"/>
    </location>
</feature>
<feature type="helix" evidence="26">
    <location>
        <begin position="630"/>
        <end position="657"/>
    </location>
</feature>
<feature type="helix" evidence="26">
    <location>
        <begin position="710"/>
        <end position="732"/>
    </location>
</feature>
<feature type="helix" evidence="26">
    <location>
        <begin position="734"/>
        <end position="752"/>
    </location>
</feature>
<feature type="helix" evidence="26">
    <location>
        <begin position="755"/>
        <end position="758"/>
    </location>
</feature>
<feature type="helix" evidence="26">
    <location>
        <begin position="763"/>
        <end position="784"/>
    </location>
</feature>
<feature type="turn" evidence="26">
    <location>
        <begin position="785"/>
        <end position="787"/>
    </location>
</feature>
<feature type="helix" evidence="26">
    <location>
        <begin position="788"/>
        <end position="802"/>
    </location>
</feature>
<feature type="turn" evidence="26">
    <location>
        <begin position="803"/>
        <end position="805"/>
    </location>
</feature>
<feature type="helix" evidence="26">
    <location>
        <begin position="806"/>
        <end position="809"/>
    </location>
</feature>
<feature type="helix" evidence="26">
    <location>
        <begin position="827"/>
        <end position="832"/>
    </location>
</feature>
<dbReference type="EMBL" id="M89778">
    <property type="protein sequence ID" value="AAA35211.1"/>
    <property type="molecule type" value="Genomic_DNA"/>
</dbReference>
<dbReference type="EMBL" id="X89633">
    <property type="protein sequence ID" value="CAA61776.1"/>
    <property type="molecule type" value="Genomic_DNA"/>
</dbReference>
<dbReference type="EMBL" id="Z75178">
    <property type="protein sequence ID" value="CAA99494.1"/>
    <property type="molecule type" value="Genomic_DNA"/>
</dbReference>
<dbReference type="EMBL" id="Z75179">
    <property type="protein sequence ID" value="CAA99496.1"/>
    <property type="molecule type" value="Genomic_DNA"/>
</dbReference>
<dbReference type="EMBL" id="BK006948">
    <property type="protein sequence ID" value="DAA11036.1"/>
    <property type="molecule type" value="Genomic_DNA"/>
</dbReference>
<dbReference type="PIR" id="A42970">
    <property type="entry name" value="A42970"/>
</dbReference>
<dbReference type="RefSeq" id="NP_014913.3">
    <property type="nucleotide sequence ID" value="NM_001183689.3"/>
</dbReference>
<dbReference type="PDB" id="2JTW">
    <property type="method" value="NMR"/>
    <property type="chains" value="A=728-748"/>
</dbReference>
<dbReference type="PDB" id="2NVJ">
    <property type="method" value="NMR"/>
    <property type="chains" value="A=721-745"/>
</dbReference>
<dbReference type="PDB" id="2RPW">
    <property type="method" value="NMR"/>
    <property type="chains" value="X=728-748"/>
</dbReference>
<dbReference type="PDB" id="3J9T">
    <property type="method" value="EM"/>
    <property type="resolution" value="6.90 A"/>
    <property type="chains" value="b=1-840"/>
</dbReference>
<dbReference type="PDB" id="3J9U">
    <property type="method" value="EM"/>
    <property type="resolution" value="7.60 A"/>
    <property type="chains" value="b=1-840"/>
</dbReference>
<dbReference type="PDB" id="3J9V">
    <property type="method" value="EM"/>
    <property type="resolution" value="8.30 A"/>
    <property type="chains" value="b=1-840"/>
</dbReference>
<dbReference type="PDB" id="5I1M">
    <property type="method" value="EM"/>
    <property type="resolution" value="7.00 A"/>
    <property type="chains" value="V=383-840"/>
</dbReference>
<dbReference type="PDB" id="5TJ5">
    <property type="method" value="EM"/>
    <property type="resolution" value="3.90 A"/>
    <property type="chains" value="A=400-829"/>
</dbReference>
<dbReference type="PDB" id="5VOX">
    <property type="method" value="EM"/>
    <property type="resolution" value="6.80 A"/>
    <property type="chains" value="b=1-840"/>
</dbReference>
<dbReference type="PDB" id="5VOY">
    <property type="method" value="EM"/>
    <property type="resolution" value="7.90 A"/>
    <property type="chains" value="b=1-840"/>
</dbReference>
<dbReference type="PDB" id="5VOZ">
    <property type="method" value="EM"/>
    <property type="resolution" value="7.60 A"/>
    <property type="chains" value="b=1-840"/>
</dbReference>
<dbReference type="PDB" id="6C6L">
    <property type="method" value="EM"/>
    <property type="resolution" value="3.50 A"/>
    <property type="chains" value="A=1-840"/>
</dbReference>
<dbReference type="PDB" id="6HH0">
    <property type="method" value="NMR"/>
    <property type="chains" value="A=728-748"/>
</dbReference>
<dbReference type="PDB" id="6M0R">
    <property type="method" value="EM"/>
    <property type="resolution" value="2.70 A"/>
    <property type="chains" value="A=3-827"/>
</dbReference>
<dbReference type="PDB" id="6M0S">
    <property type="method" value="EM"/>
    <property type="resolution" value="3.60 A"/>
    <property type="chains" value="A=3-827"/>
</dbReference>
<dbReference type="PDB" id="6O7T">
    <property type="method" value="EM"/>
    <property type="resolution" value="3.20 A"/>
    <property type="chains" value="a=1-840"/>
</dbReference>
<dbReference type="PDB" id="6PE4">
    <property type="method" value="EM"/>
    <property type="resolution" value="3.10 A"/>
    <property type="chains" value="A=1-840"/>
</dbReference>
<dbReference type="PDB" id="6PE5">
    <property type="method" value="EM"/>
    <property type="resolution" value="3.20 A"/>
    <property type="chains" value="A=1-840"/>
</dbReference>
<dbReference type="PDB" id="7FDA">
    <property type="method" value="EM"/>
    <property type="resolution" value="4.20 A"/>
    <property type="chains" value="Q=1-840"/>
</dbReference>
<dbReference type="PDB" id="7FDB">
    <property type="method" value="EM"/>
    <property type="resolution" value="4.80 A"/>
    <property type="chains" value="Q=1-840"/>
</dbReference>
<dbReference type="PDB" id="7FDC">
    <property type="method" value="EM"/>
    <property type="resolution" value="6.60 A"/>
    <property type="chains" value="Q=1-840"/>
</dbReference>
<dbReference type="PDB" id="7TAO">
    <property type="method" value="EM"/>
    <property type="resolution" value="3.20 A"/>
    <property type="chains" value="A=1-840"/>
</dbReference>
<dbReference type="PDB" id="7TAP">
    <property type="method" value="EM"/>
    <property type="resolution" value="2.80 A"/>
    <property type="chains" value="A=1-840"/>
</dbReference>
<dbReference type="PDB" id="7TMR">
    <property type="method" value="EM"/>
    <property type="resolution" value="3.50 A"/>
    <property type="chains" value="a=1-840"/>
</dbReference>
<dbReference type="PDB" id="7TMS">
    <property type="method" value="EM"/>
    <property type="resolution" value="3.80 A"/>
    <property type="chains" value="a=1-840"/>
</dbReference>
<dbReference type="PDB" id="7TMT">
    <property type="method" value="EM"/>
    <property type="resolution" value="3.80 A"/>
    <property type="chains" value="a=1-840"/>
</dbReference>
<dbReference type="PDB" id="8EAS">
    <property type="method" value="EM"/>
    <property type="resolution" value="2.60 A"/>
    <property type="chains" value="a=1-840"/>
</dbReference>
<dbReference type="PDB" id="8EAU">
    <property type="method" value="EM"/>
    <property type="resolution" value="3.10 A"/>
    <property type="chains" value="a=1-840"/>
</dbReference>
<dbReference type="PDB" id="9E76">
    <property type="method" value="EM"/>
    <property type="resolution" value="3.40 A"/>
    <property type="chains" value="A=1-840"/>
</dbReference>
<dbReference type="PDB" id="9E7L">
    <property type="method" value="EM"/>
    <property type="resolution" value="3.33 A"/>
    <property type="chains" value="A=1-840"/>
</dbReference>
<dbReference type="PDB" id="9MJ4">
    <property type="method" value="EM"/>
    <property type="resolution" value="3.70 A"/>
    <property type="chains" value="A=1-840"/>
</dbReference>
<dbReference type="PDBsum" id="2JTW"/>
<dbReference type="PDBsum" id="2NVJ"/>
<dbReference type="PDBsum" id="2RPW"/>
<dbReference type="PDBsum" id="3J9T"/>
<dbReference type="PDBsum" id="3J9U"/>
<dbReference type="PDBsum" id="3J9V"/>
<dbReference type="PDBsum" id="5I1M"/>
<dbReference type="PDBsum" id="5TJ5"/>
<dbReference type="PDBsum" id="5VOX"/>
<dbReference type="PDBsum" id="5VOY"/>
<dbReference type="PDBsum" id="5VOZ"/>
<dbReference type="PDBsum" id="6C6L"/>
<dbReference type="PDBsum" id="6HH0"/>
<dbReference type="PDBsum" id="6M0R"/>
<dbReference type="PDBsum" id="6M0S"/>
<dbReference type="PDBsum" id="6O7T"/>
<dbReference type="PDBsum" id="6PE4"/>
<dbReference type="PDBsum" id="6PE5"/>
<dbReference type="PDBsum" id="7FDA"/>
<dbReference type="PDBsum" id="7FDB"/>
<dbReference type="PDBsum" id="7FDC"/>
<dbReference type="PDBsum" id="7TAO"/>
<dbReference type="PDBsum" id="7TAP"/>
<dbReference type="PDBsum" id="7TMR"/>
<dbReference type="PDBsum" id="7TMS"/>
<dbReference type="PDBsum" id="7TMT"/>
<dbReference type="PDBsum" id="8EAS"/>
<dbReference type="PDBsum" id="8EAU"/>
<dbReference type="PDBsum" id="9E76"/>
<dbReference type="PDBsum" id="9E7L"/>
<dbReference type="PDBsum" id="9MJ4"/>
<dbReference type="BMRB" id="P32563"/>
<dbReference type="EMDB" id="EMD-0644"/>
<dbReference type="EMDB" id="EMD-20322"/>
<dbReference type="EMDB" id="EMD-20323"/>
<dbReference type="EMDB" id="EMD-25779"/>
<dbReference type="EMDB" id="EMD-25780"/>
<dbReference type="EMDB" id="EMD-26000"/>
<dbReference type="EMDB" id="EMD-26001"/>
<dbReference type="EMDB" id="EMD-26002"/>
<dbReference type="EMDB" id="EMD-27984"/>
<dbReference type="EMDB" id="EMD-27986"/>
<dbReference type="EMDB" id="EMD-30034"/>
<dbReference type="EMDB" id="EMD-30035"/>
<dbReference type="EMDB" id="EMD-31538"/>
<dbReference type="EMDB" id="EMD-31539"/>
<dbReference type="EMDB" id="EMD-31540"/>
<dbReference type="EMDB" id="EMD-47659"/>
<dbReference type="EMDB" id="EMD-47679"/>
<dbReference type="EMDB" id="EMD-48311"/>
<dbReference type="EMDB" id="EMD-7348"/>
<dbReference type="EMDB" id="EMD-8070"/>
<dbReference type="EMDB" id="EMD-8409"/>
<dbReference type="EMDB" id="EMD-8724"/>
<dbReference type="EMDB" id="EMD-8725"/>
<dbReference type="EMDB" id="EMD-8726"/>
<dbReference type="SMR" id="P32563"/>
<dbReference type="BioGRID" id="34659">
    <property type="interactions" value="410"/>
</dbReference>
<dbReference type="ComplexPortal" id="CPX-1193">
    <property type="entry name" value="Vacuolar proton translocating ATPase complex, vacuole variant"/>
</dbReference>
<dbReference type="DIP" id="DIP-2960N"/>
<dbReference type="FunCoup" id="P32563">
    <property type="interactions" value="536"/>
</dbReference>
<dbReference type="IntAct" id="P32563">
    <property type="interactions" value="68"/>
</dbReference>
<dbReference type="MINT" id="P32563"/>
<dbReference type="STRING" id="4932.YOR270C"/>
<dbReference type="TCDB" id="3.A.2.2.3">
    <property type="family name" value="the h+- or na+-translocating f-type, v-type and a-type atpase (f-atpase) superfamily"/>
</dbReference>
<dbReference type="iPTMnet" id="P32563"/>
<dbReference type="PaxDb" id="4932-YOR270C"/>
<dbReference type="PeptideAtlas" id="P32563"/>
<dbReference type="EnsemblFungi" id="YOR270C_mRNA">
    <property type="protein sequence ID" value="YOR270C"/>
    <property type="gene ID" value="YOR270C"/>
</dbReference>
<dbReference type="GeneID" id="854444"/>
<dbReference type="KEGG" id="sce:YOR270C"/>
<dbReference type="AGR" id="SGD:S000005796"/>
<dbReference type="SGD" id="S000005796">
    <property type="gene designation" value="VPH1"/>
</dbReference>
<dbReference type="VEuPathDB" id="FungiDB:YOR270C"/>
<dbReference type="eggNOG" id="KOG2189">
    <property type="taxonomic scope" value="Eukaryota"/>
</dbReference>
<dbReference type="GeneTree" id="ENSGT00950000182881"/>
<dbReference type="HOGENOM" id="CLU_005230_0_2_1"/>
<dbReference type="InParanoid" id="P32563"/>
<dbReference type="OMA" id="FYLWFFL"/>
<dbReference type="OrthoDB" id="10264220at2759"/>
<dbReference type="BioCyc" id="YEAST:G3O-33760-MONOMER"/>
<dbReference type="Reactome" id="R-SCE-1222556">
    <property type="pathway name" value="ROS and RNS production in phagocytes"/>
</dbReference>
<dbReference type="Reactome" id="R-SCE-6798695">
    <property type="pathway name" value="Neutrophil degranulation"/>
</dbReference>
<dbReference type="Reactome" id="R-SCE-77387">
    <property type="pathway name" value="Insulin receptor recycling"/>
</dbReference>
<dbReference type="Reactome" id="R-SCE-917977">
    <property type="pathway name" value="Transferrin endocytosis and recycling"/>
</dbReference>
<dbReference type="Reactome" id="R-SCE-9639288">
    <property type="pathway name" value="Amino acids regulate mTORC1"/>
</dbReference>
<dbReference type="BioGRID-ORCS" id="854444">
    <property type="hits" value="8 hits in 10 CRISPR screens"/>
</dbReference>
<dbReference type="EvolutionaryTrace" id="P32563"/>
<dbReference type="PRO" id="PR:P32563"/>
<dbReference type="Proteomes" id="UP000002311">
    <property type="component" value="Chromosome XV"/>
</dbReference>
<dbReference type="RNAct" id="P32563">
    <property type="molecule type" value="protein"/>
</dbReference>
<dbReference type="GO" id="GO:0000324">
    <property type="term" value="C:fungal-type vacuole"/>
    <property type="evidence" value="ECO:0000314"/>
    <property type="project" value="SGD"/>
</dbReference>
<dbReference type="GO" id="GO:0000329">
    <property type="term" value="C:fungal-type vacuole membrane"/>
    <property type="evidence" value="ECO:0000314"/>
    <property type="project" value="UniProtKB"/>
</dbReference>
<dbReference type="GO" id="GO:0045121">
    <property type="term" value="C:membrane raft"/>
    <property type="evidence" value="ECO:0000314"/>
    <property type="project" value="SGD"/>
</dbReference>
<dbReference type="GO" id="GO:0016471">
    <property type="term" value="C:vacuolar proton-transporting V-type ATPase complex"/>
    <property type="evidence" value="ECO:0000353"/>
    <property type="project" value="ComplexPortal"/>
</dbReference>
<dbReference type="GO" id="GO:0000220">
    <property type="term" value="C:vacuolar proton-transporting V-type ATPase, V0 domain"/>
    <property type="evidence" value="ECO:0000314"/>
    <property type="project" value="UniProtKB"/>
</dbReference>
<dbReference type="GO" id="GO:0051117">
    <property type="term" value="F:ATPase binding"/>
    <property type="evidence" value="ECO:0000318"/>
    <property type="project" value="GO_Central"/>
</dbReference>
<dbReference type="GO" id="GO:0080025">
    <property type="term" value="F:phosphatidylinositol-3,5-bisphosphate binding"/>
    <property type="evidence" value="ECO:0000314"/>
    <property type="project" value="SGD"/>
</dbReference>
<dbReference type="GO" id="GO:0046961">
    <property type="term" value="F:proton-transporting ATPase activity, rotational mechanism"/>
    <property type="evidence" value="ECO:0000315"/>
    <property type="project" value="UniProtKB"/>
</dbReference>
<dbReference type="GO" id="GO:0071474">
    <property type="term" value="P:cellular hyperosmotic response"/>
    <property type="evidence" value="ECO:0000316"/>
    <property type="project" value="SGD"/>
</dbReference>
<dbReference type="GO" id="GO:0071469">
    <property type="term" value="P:cellular response to alkaline pH"/>
    <property type="evidence" value="ECO:0000316"/>
    <property type="project" value="UniProtKB"/>
</dbReference>
<dbReference type="GO" id="GO:0006797">
    <property type="term" value="P:polyphosphate metabolic process"/>
    <property type="evidence" value="ECO:0000315"/>
    <property type="project" value="SGD"/>
</dbReference>
<dbReference type="GO" id="GO:1903778">
    <property type="term" value="P:protein localization to vacuolar membrane"/>
    <property type="evidence" value="ECO:0000315"/>
    <property type="project" value="SGD"/>
</dbReference>
<dbReference type="GO" id="GO:0065003">
    <property type="term" value="P:protein-containing complex assembly"/>
    <property type="evidence" value="ECO:0000315"/>
    <property type="project" value="SGD"/>
</dbReference>
<dbReference type="GO" id="GO:1902600">
    <property type="term" value="P:proton transmembrane transport"/>
    <property type="evidence" value="ECO:0000314"/>
    <property type="project" value="FlyBase"/>
</dbReference>
<dbReference type="GO" id="GO:0007035">
    <property type="term" value="P:vacuolar acidification"/>
    <property type="evidence" value="ECO:0000315"/>
    <property type="project" value="SGD"/>
</dbReference>
<dbReference type="InterPro" id="IPR002490">
    <property type="entry name" value="V-ATPase_116kDa_su"/>
</dbReference>
<dbReference type="InterPro" id="IPR026028">
    <property type="entry name" value="V-type_ATPase_116kDa_su_euka"/>
</dbReference>
<dbReference type="PANTHER" id="PTHR11629:SF63">
    <property type="entry name" value="V-TYPE PROTON ATPASE SUBUNIT A"/>
    <property type="match status" value="1"/>
</dbReference>
<dbReference type="PANTHER" id="PTHR11629">
    <property type="entry name" value="VACUOLAR PROTON ATPASES"/>
    <property type="match status" value="1"/>
</dbReference>
<dbReference type="Pfam" id="PF01496">
    <property type="entry name" value="V_ATPase_I"/>
    <property type="match status" value="1"/>
</dbReference>
<dbReference type="PIRSF" id="PIRSF001293">
    <property type="entry name" value="ATP6V0A1"/>
    <property type="match status" value="1"/>
</dbReference>